<sequence length="397" mass="42648">MSNSFVLVINSGSSSLKFAVIDSVSGDAVLSGLGECFGLSDARMSWKFNGEKKEISIEGDDSHHKIAIGKLVGLTEELGLAQDIVAVGHRIVHGGEKFTKTVRITEEVTQEIEKLADLAPLHNPAGAIGIRAAVEAFPSLPQFAVFDTAFHQTMPQRAFTGAIAKELYTDFGIRRYGFHGTSHYFVSREAAKMINKPIEESSFISVHLGNGASVCAINNGESVDTSMGFTPLSGLMMGTRCGDLDPGIIEYLLKKGWSQEKVFNSLNKASGFLGVSGLTSDARGILEAMEEGHEGAALAFQVFTYRVSKYIASYLAALDSFDGIIFTGGIGENSMPIRREILKNLKLLGFVEDVKGNEDARFGNAGVIATSELLGAKALVIPTNEEWVIAQQSVELL</sequence>
<comment type="function">
    <text evidence="1">Catalyzes the formation of acetyl phosphate from acetate and ATP. Can also catalyze the reverse reaction.</text>
</comment>
<comment type="catalytic activity">
    <reaction evidence="1">
        <text>acetate + ATP = acetyl phosphate + ADP</text>
        <dbReference type="Rhea" id="RHEA:11352"/>
        <dbReference type="ChEBI" id="CHEBI:22191"/>
        <dbReference type="ChEBI" id="CHEBI:30089"/>
        <dbReference type="ChEBI" id="CHEBI:30616"/>
        <dbReference type="ChEBI" id="CHEBI:456216"/>
        <dbReference type="EC" id="2.7.2.1"/>
    </reaction>
</comment>
<comment type="cofactor">
    <cofactor evidence="1">
        <name>Mg(2+)</name>
        <dbReference type="ChEBI" id="CHEBI:18420"/>
    </cofactor>
    <cofactor evidence="1">
        <name>Mn(2+)</name>
        <dbReference type="ChEBI" id="CHEBI:29035"/>
    </cofactor>
    <text evidence="1">Mg(2+). Can also accept Mn(2+).</text>
</comment>
<comment type="pathway">
    <text evidence="1">Metabolic intermediate biosynthesis; acetyl-CoA biosynthesis; acetyl-CoA from acetate: step 1/2.</text>
</comment>
<comment type="subunit">
    <text evidence="1">Homodimer.</text>
</comment>
<comment type="subcellular location">
    <subcellularLocation>
        <location evidence="1">Cytoplasm</location>
    </subcellularLocation>
</comment>
<comment type="similarity">
    <text evidence="1">Belongs to the acetokinase family.</text>
</comment>
<keyword id="KW-0067">ATP-binding</keyword>
<keyword id="KW-0963">Cytoplasm</keyword>
<keyword id="KW-0418">Kinase</keyword>
<keyword id="KW-0460">Magnesium</keyword>
<keyword id="KW-0479">Metal-binding</keyword>
<keyword id="KW-0547">Nucleotide-binding</keyword>
<keyword id="KW-0808">Transferase</keyword>
<protein>
    <recommendedName>
        <fullName evidence="1">Acetate kinase 2</fullName>
        <ecNumber evidence="1">2.7.2.1</ecNumber>
    </recommendedName>
    <alternativeName>
        <fullName evidence="1">Acetokinase 2</fullName>
    </alternativeName>
</protein>
<accession>Q87IJ5</accession>
<reference key="1">
    <citation type="journal article" date="2003" name="Lancet">
        <title>Genome sequence of Vibrio parahaemolyticus: a pathogenic mechanism distinct from that of V. cholerae.</title>
        <authorList>
            <person name="Makino K."/>
            <person name="Oshima K."/>
            <person name="Kurokawa K."/>
            <person name="Yokoyama K."/>
            <person name="Uda T."/>
            <person name="Tagomori K."/>
            <person name="Iijima Y."/>
            <person name="Najima M."/>
            <person name="Nakano M."/>
            <person name="Yamashita A."/>
            <person name="Kubota Y."/>
            <person name="Kimura S."/>
            <person name="Yasunaga T."/>
            <person name="Honda T."/>
            <person name="Shinagawa H."/>
            <person name="Hattori M."/>
            <person name="Iida T."/>
        </authorList>
    </citation>
    <scope>NUCLEOTIDE SEQUENCE [LARGE SCALE GENOMIC DNA]</scope>
    <source>
        <strain>RIMD 2210633</strain>
    </source>
</reference>
<feature type="chain" id="PRO_0000107640" description="Acetate kinase 2">
    <location>
        <begin position="1"/>
        <end position="397"/>
    </location>
</feature>
<feature type="active site" description="Proton donor/acceptor" evidence="1">
    <location>
        <position position="147"/>
    </location>
</feature>
<feature type="binding site" evidence="1">
    <location>
        <position position="10"/>
    </location>
    <ligand>
        <name>Mg(2+)</name>
        <dbReference type="ChEBI" id="CHEBI:18420"/>
    </ligand>
</feature>
<feature type="binding site" evidence="1">
    <location>
        <position position="17"/>
    </location>
    <ligand>
        <name>ATP</name>
        <dbReference type="ChEBI" id="CHEBI:30616"/>
    </ligand>
</feature>
<feature type="binding site" evidence="1">
    <location>
        <position position="90"/>
    </location>
    <ligand>
        <name>substrate</name>
    </ligand>
</feature>
<feature type="binding site" evidence="1">
    <location>
        <begin position="207"/>
        <end position="211"/>
    </location>
    <ligand>
        <name>ATP</name>
        <dbReference type="ChEBI" id="CHEBI:30616"/>
    </ligand>
</feature>
<feature type="binding site" evidence="1">
    <location>
        <begin position="281"/>
        <end position="283"/>
    </location>
    <ligand>
        <name>ATP</name>
        <dbReference type="ChEBI" id="CHEBI:30616"/>
    </ligand>
</feature>
<feature type="binding site" evidence="1">
    <location>
        <begin position="329"/>
        <end position="333"/>
    </location>
    <ligand>
        <name>ATP</name>
        <dbReference type="ChEBI" id="CHEBI:30616"/>
    </ligand>
</feature>
<feature type="binding site" evidence="1">
    <location>
        <position position="385"/>
    </location>
    <ligand>
        <name>Mg(2+)</name>
        <dbReference type="ChEBI" id="CHEBI:18420"/>
    </ligand>
</feature>
<feature type="site" description="Transition state stabilizer" evidence="1">
    <location>
        <position position="179"/>
    </location>
</feature>
<feature type="site" description="Transition state stabilizer" evidence="1">
    <location>
        <position position="240"/>
    </location>
</feature>
<gene>
    <name evidence="1" type="primary">ackA2</name>
    <name type="ordered locus">VPA0611</name>
</gene>
<dbReference type="EC" id="2.7.2.1" evidence="1"/>
<dbReference type="EMBL" id="BA000032">
    <property type="protein sequence ID" value="BAC61954.1"/>
    <property type="molecule type" value="Genomic_DNA"/>
</dbReference>
<dbReference type="RefSeq" id="NP_800121.1">
    <property type="nucleotide sequence ID" value="NC_004605.1"/>
</dbReference>
<dbReference type="RefSeq" id="WP_005483382.1">
    <property type="nucleotide sequence ID" value="NC_004605.1"/>
</dbReference>
<dbReference type="SMR" id="Q87IJ5"/>
<dbReference type="GeneID" id="1191300"/>
<dbReference type="KEGG" id="vpa:VPA0611"/>
<dbReference type="PATRIC" id="fig|223926.6.peg.3550"/>
<dbReference type="eggNOG" id="COG0282">
    <property type="taxonomic scope" value="Bacteria"/>
</dbReference>
<dbReference type="HOGENOM" id="CLU_020352_0_1_6"/>
<dbReference type="UniPathway" id="UPA00340">
    <property type="reaction ID" value="UER00458"/>
</dbReference>
<dbReference type="Proteomes" id="UP000002493">
    <property type="component" value="Chromosome 2"/>
</dbReference>
<dbReference type="GO" id="GO:0005829">
    <property type="term" value="C:cytosol"/>
    <property type="evidence" value="ECO:0007669"/>
    <property type="project" value="TreeGrafter"/>
</dbReference>
<dbReference type="GO" id="GO:0008776">
    <property type="term" value="F:acetate kinase activity"/>
    <property type="evidence" value="ECO:0007669"/>
    <property type="project" value="UniProtKB-UniRule"/>
</dbReference>
<dbReference type="GO" id="GO:0005524">
    <property type="term" value="F:ATP binding"/>
    <property type="evidence" value="ECO:0007669"/>
    <property type="project" value="UniProtKB-KW"/>
</dbReference>
<dbReference type="GO" id="GO:0000287">
    <property type="term" value="F:magnesium ion binding"/>
    <property type="evidence" value="ECO:0007669"/>
    <property type="project" value="UniProtKB-UniRule"/>
</dbReference>
<dbReference type="GO" id="GO:0006083">
    <property type="term" value="P:acetate metabolic process"/>
    <property type="evidence" value="ECO:0007669"/>
    <property type="project" value="TreeGrafter"/>
</dbReference>
<dbReference type="GO" id="GO:0006085">
    <property type="term" value="P:acetyl-CoA biosynthetic process"/>
    <property type="evidence" value="ECO:0007669"/>
    <property type="project" value="UniProtKB-UniRule"/>
</dbReference>
<dbReference type="CDD" id="cd24010">
    <property type="entry name" value="ASKHA_NBD_AcK_PK"/>
    <property type="match status" value="1"/>
</dbReference>
<dbReference type="Gene3D" id="3.30.420.40">
    <property type="match status" value="2"/>
</dbReference>
<dbReference type="HAMAP" id="MF_00020">
    <property type="entry name" value="Acetate_kinase"/>
    <property type="match status" value="1"/>
</dbReference>
<dbReference type="InterPro" id="IPR004372">
    <property type="entry name" value="Ac/propionate_kinase"/>
</dbReference>
<dbReference type="InterPro" id="IPR000890">
    <property type="entry name" value="Aliphatic_acid_kin_short-chain"/>
</dbReference>
<dbReference type="InterPro" id="IPR023865">
    <property type="entry name" value="Aliphatic_acid_kinase_CS"/>
</dbReference>
<dbReference type="InterPro" id="IPR043129">
    <property type="entry name" value="ATPase_NBD"/>
</dbReference>
<dbReference type="NCBIfam" id="TIGR00016">
    <property type="entry name" value="ackA"/>
    <property type="match status" value="1"/>
</dbReference>
<dbReference type="NCBIfam" id="NF009099">
    <property type="entry name" value="PRK12440.1"/>
    <property type="match status" value="1"/>
</dbReference>
<dbReference type="PANTHER" id="PTHR21060">
    <property type="entry name" value="ACETATE KINASE"/>
    <property type="match status" value="1"/>
</dbReference>
<dbReference type="PANTHER" id="PTHR21060:SF21">
    <property type="entry name" value="ACETATE KINASE"/>
    <property type="match status" value="1"/>
</dbReference>
<dbReference type="Pfam" id="PF00871">
    <property type="entry name" value="Acetate_kinase"/>
    <property type="match status" value="1"/>
</dbReference>
<dbReference type="PIRSF" id="PIRSF000722">
    <property type="entry name" value="Acetate_prop_kin"/>
    <property type="match status" value="1"/>
</dbReference>
<dbReference type="PRINTS" id="PR00471">
    <property type="entry name" value="ACETATEKNASE"/>
</dbReference>
<dbReference type="SUPFAM" id="SSF53067">
    <property type="entry name" value="Actin-like ATPase domain"/>
    <property type="match status" value="2"/>
</dbReference>
<dbReference type="PROSITE" id="PS01075">
    <property type="entry name" value="ACETATE_KINASE_1"/>
    <property type="match status" value="1"/>
</dbReference>
<dbReference type="PROSITE" id="PS01076">
    <property type="entry name" value="ACETATE_KINASE_2"/>
    <property type="match status" value="1"/>
</dbReference>
<name>ACKA2_VIBPA</name>
<organism>
    <name type="scientific">Vibrio parahaemolyticus serotype O3:K6 (strain RIMD 2210633)</name>
    <dbReference type="NCBI Taxonomy" id="223926"/>
    <lineage>
        <taxon>Bacteria</taxon>
        <taxon>Pseudomonadati</taxon>
        <taxon>Pseudomonadota</taxon>
        <taxon>Gammaproteobacteria</taxon>
        <taxon>Vibrionales</taxon>
        <taxon>Vibrionaceae</taxon>
        <taxon>Vibrio</taxon>
    </lineage>
</organism>
<proteinExistence type="inferred from homology"/>
<evidence type="ECO:0000255" key="1">
    <source>
        <dbReference type="HAMAP-Rule" id="MF_00020"/>
    </source>
</evidence>